<comment type="function">
    <text>Nitrate reductase is a key enzyme involved in the first step of nitrate assimilation in plants, fungi and bacteria.</text>
</comment>
<comment type="catalytic activity">
    <reaction>
        <text>nitrite + NAD(+) + H2O = nitrate + NADH + H(+)</text>
        <dbReference type="Rhea" id="RHEA:17913"/>
        <dbReference type="ChEBI" id="CHEBI:15377"/>
        <dbReference type="ChEBI" id="CHEBI:15378"/>
        <dbReference type="ChEBI" id="CHEBI:16301"/>
        <dbReference type="ChEBI" id="CHEBI:17632"/>
        <dbReference type="ChEBI" id="CHEBI:57540"/>
        <dbReference type="ChEBI" id="CHEBI:57945"/>
        <dbReference type="EC" id="1.7.1.1"/>
    </reaction>
</comment>
<comment type="cofactor">
    <cofactor evidence="1">
        <name>FAD</name>
        <dbReference type="ChEBI" id="CHEBI:57692"/>
    </cofactor>
    <text evidence="1">Binds 1 FAD.</text>
</comment>
<comment type="cofactor">
    <cofactor evidence="1">
        <name>heme</name>
        <dbReference type="ChEBI" id="CHEBI:30413"/>
    </cofactor>
    <text evidence="1">Binds 1 heme group. The heme group is called cytochrome b-557.</text>
</comment>
<comment type="cofactor">
    <cofactor evidence="1">
        <name>Mo-molybdopterin</name>
        <dbReference type="ChEBI" id="CHEBI:71302"/>
    </cofactor>
    <text evidence="1">Binds 1 Mo-molybdopterin (Mo-MPT) cofactor per subunit.</text>
</comment>
<comment type="subunit">
    <text evidence="1">Homodimer.</text>
</comment>
<comment type="similarity">
    <text evidence="9">Belongs to the nitrate reductase family.</text>
</comment>
<name>NIA1_PHAVU</name>
<sequence>MAASVEHRPFTSHQHGVVRSFKSYPDVPRPKKLPLPQPLSDSTNDNDEEAAVWKELVLKSSAGVEPSIFDPRDDGTSDQWIKRNASMIRLTGKHPFNAEPPLPRLMQHGFITPSPIHYVRSHGPVPHARWEDWTVEVTGLVTRPTCFTMEQLVNDFPSHEFPATLVCAGNRRKEQNMVKQSIGFNWGAGGVSTSVWRGVSLRSLLKRCGIYSRAKGALHVCFEGAEDLPGGGGSNYGTSLMREVALDPSRDIILAYMQNGELLSPDHGFPVRMIIPGFIGGRMVKWLKRIVVSNQQSQSHYHYKDNKLFPSHVDAELANEEDWWYKPEYIINEVNINSVITTPSHQEILPINSWTTQMPYSMRGYAYSGGGRKVTRVEVTLDGGETWQVCSVERLEKPNKYGKYWCWCFWSLEVEVLDILGAKEIAVRAWDEAQNTQPEKLIWNTMGMINNCWFRVKTNVCKPKKGEIGIVFEHPTQPGNQSGGWMAREKQLEKSSESNPILKKSVSSPFMNTATKSYSLSEVRRHNNRDSAWIIVNGHVYDCTRFLKDHPGGEDSILLNAGTDCTEEFEAIHSDKAKKMLEDYRIGELMTTDYTSDSSSSNNSVHGNSETTHLAPIREVALNPREKIPCKLLSKTSISHDVRLLRFALPAEDQVMGLPVGNHVFLCATVDEKLCMRAYTPTSSVDEVGFFDLVVKVYFKGVHPNFPNGGIMSQHLDSLPIGSVVDVKGPLGHIEYTGRGNFLVHGKPRFAKRLTMLAGGTGITPIYQVVQAILKDPEDRTEMYVVYANRTEDDILLKEELDEWAKKHDRLKVWYVLQANIREGWEYSVGFITESILREHVPLASPDTLALTCGPPPMIQFAVQPNLEKLGYDIQNDLLVF</sequence>
<gene>
    <name type="primary">NIA1</name>
    <name type="synonym">NR1</name>
</gene>
<keyword id="KW-1015">Disulfide bond</keyword>
<keyword id="KW-0274">FAD</keyword>
<keyword id="KW-0285">Flavoprotein</keyword>
<keyword id="KW-0349">Heme</keyword>
<keyword id="KW-0408">Iron</keyword>
<keyword id="KW-0479">Metal-binding</keyword>
<keyword id="KW-0500">Molybdenum</keyword>
<keyword id="KW-0520">NAD</keyword>
<keyword id="KW-0534">Nitrate assimilation</keyword>
<keyword id="KW-0560">Oxidoreductase</keyword>
<organism>
    <name type="scientific">Phaseolus vulgaris</name>
    <name type="common">Kidney bean</name>
    <name type="synonym">French bean</name>
    <dbReference type="NCBI Taxonomy" id="3885"/>
    <lineage>
        <taxon>Eukaryota</taxon>
        <taxon>Viridiplantae</taxon>
        <taxon>Streptophyta</taxon>
        <taxon>Embryophyta</taxon>
        <taxon>Tracheophyta</taxon>
        <taxon>Spermatophyta</taxon>
        <taxon>Magnoliopsida</taxon>
        <taxon>eudicotyledons</taxon>
        <taxon>Gunneridae</taxon>
        <taxon>Pentapetalae</taxon>
        <taxon>rosids</taxon>
        <taxon>fabids</taxon>
        <taxon>Fabales</taxon>
        <taxon>Fabaceae</taxon>
        <taxon>Papilionoideae</taxon>
        <taxon>50 kb inversion clade</taxon>
        <taxon>NPAAA clade</taxon>
        <taxon>indigoferoid/millettioid clade</taxon>
        <taxon>Phaseoleae</taxon>
        <taxon>Phaseolus</taxon>
    </lineage>
</organism>
<reference key="1">
    <citation type="journal article" date="1991" name="Physiol. Plantarum">
        <title>Cloning and expression of a gene encoding a root specific nitrate reductase in bean (Phaseolus vulgaris).</title>
        <authorList>
            <person name="Hoff T."/>
            <person name="Stummann B.M."/>
            <person name="Henningsen K.W."/>
        </authorList>
    </citation>
    <scope>NUCLEOTIDE SEQUENCE [GENOMIC DNA]</scope>
    <source>
        <strain>cv. Saxa</strain>
        <tissue>Shoot</tissue>
    </source>
</reference>
<protein>
    <recommendedName>
        <fullName>Nitrate reductase [NADH] 1</fullName>
        <shortName>NR-1</shortName>
        <ecNumber>1.7.1.1</ecNumber>
    </recommendedName>
</protein>
<evidence type="ECO:0000250" key="1"/>
<evidence type="ECO:0000250" key="2">
    <source>
        <dbReference type="UniProtKB" id="A0A286R227"/>
    </source>
</evidence>
<evidence type="ECO:0000250" key="3">
    <source>
        <dbReference type="UniProtKB" id="P17571"/>
    </source>
</evidence>
<evidence type="ECO:0000250" key="4">
    <source>
        <dbReference type="UniProtKB" id="P49050"/>
    </source>
</evidence>
<evidence type="ECO:0000255" key="5"/>
<evidence type="ECO:0000255" key="6">
    <source>
        <dbReference type="PROSITE-ProRule" id="PRU00279"/>
    </source>
</evidence>
<evidence type="ECO:0000255" key="7">
    <source>
        <dbReference type="PROSITE-ProRule" id="PRU00716"/>
    </source>
</evidence>
<evidence type="ECO:0000256" key="8">
    <source>
        <dbReference type="SAM" id="MobiDB-lite"/>
    </source>
</evidence>
<evidence type="ECO:0000305" key="9"/>
<dbReference type="EC" id="1.7.1.1"/>
<dbReference type="EMBL" id="X53603">
    <property type="protein sequence ID" value="CAA37672.1"/>
    <property type="molecule type" value="Genomic_DNA"/>
</dbReference>
<dbReference type="PIR" id="S25445">
    <property type="entry name" value="S25445"/>
</dbReference>
<dbReference type="SMR" id="P39865"/>
<dbReference type="eggNOG" id="KOG0534">
    <property type="taxonomic scope" value="Eukaryota"/>
</dbReference>
<dbReference type="eggNOG" id="KOG0535">
    <property type="taxonomic scope" value="Eukaryota"/>
</dbReference>
<dbReference type="eggNOG" id="KOG0537">
    <property type="taxonomic scope" value="Eukaryota"/>
</dbReference>
<dbReference type="GO" id="GO:0071949">
    <property type="term" value="F:FAD binding"/>
    <property type="evidence" value="ECO:0000250"/>
    <property type="project" value="UniProtKB"/>
</dbReference>
<dbReference type="GO" id="GO:0020037">
    <property type="term" value="F:heme binding"/>
    <property type="evidence" value="ECO:0007669"/>
    <property type="project" value="InterPro"/>
</dbReference>
<dbReference type="GO" id="GO:0030151">
    <property type="term" value="F:molybdenum ion binding"/>
    <property type="evidence" value="ECO:0000250"/>
    <property type="project" value="UniProtKB"/>
</dbReference>
<dbReference type="GO" id="GO:0043546">
    <property type="term" value="F:molybdopterin cofactor binding"/>
    <property type="evidence" value="ECO:0007669"/>
    <property type="project" value="InterPro"/>
</dbReference>
<dbReference type="GO" id="GO:0009703">
    <property type="term" value="F:nitrate reductase (NADH) activity"/>
    <property type="evidence" value="ECO:0007669"/>
    <property type="project" value="UniProtKB-EC"/>
</dbReference>
<dbReference type="GO" id="GO:0050464">
    <property type="term" value="F:nitrate reductase (NADPH) activity"/>
    <property type="evidence" value="ECO:0007669"/>
    <property type="project" value="InterPro"/>
</dbReference>
<dbReference type="GO" id="GO:0008482">
    <property type="term" value="F:sulfite oxidase activity"/>
    <property type="evidence" value="ECO:0007669"/>
    <property type="project" value="TreeGrafter"/>
</dbReference>
<dbReference type="GO" id="GO:0042128">
    <property type="term" value="P:nitrate assimilation"/>
    <property type="evidence" value="ECO:0007669"/>
    <property type="project" value="UniProtKB-KW"/>
</dbReference>
<dbReference type="GO" id="GO:0006809">
    <property type="term" value="P:nitric oxide biosynthetic process"/>
    <property type="evidence" value="ECO:0007669"/>
    <property type="project" value="InterPro"/>
</dbReference>
<dbReference type="GO" id="GO:0006790">
    <property type="term" value="P:sulfur compound metabolic process"/>
    <property type="evidence" value="ECO:0007669"/>
    <property type="project" value="TreeGrafter"/>
</dbReference>
<dbReference type="CDD" id="cd06183">
    <property type="entry name" value="cyt_b5_reduct_like"/>
    <property type="match status" value="1"/>
</dbReference>
<dbReference type="CDD" id="cd02112">
    <property type="entry name" value="eukary_NR_Moco"/>
    <property type="match status" value="1"/>
</dbReference>
<dbReference type="FunFam" id="2.40.30.10:FF:000021">
    <property type="entry name" value="NADH-cytochrome b5 reductase"/>
    <property type="match status" value="1"/>
</dbReference>
<dbReference type="FunFam" id="2.60.40.650:FF:000001">
    <property type="entry name" value="Nitrate reductase"/>
    <property type="match status" value="1"/>
</dbReference>
<dbReference type="FunFam" id="3.90.420.10:FF:000003">
    <property type="entry name" value="Nitrate reductase"/>
    <property type="match status" value="1"/>
</dbReference>
<dbReference type="FunFam" id="3.40.50.80:FF:000025">
    <property type="entry name" value="Nitrate reductase [NADH]"/>
    <property type="match status" value="1"/>
</dbReference>
<dbReference type="FunFam" id="3.10.120.10:FF:000007">
    <property type="entry name" value="Sulfite oxidase, mitochondrial"/>
    <property type="match status" value="1"/>
</dbReference>
<dbReference type="Gene3D" id="2.60.40.650">
    <property type="match status" value="1"/>
</dbReference>
<dbReference type="Gene3D" id="3.10.120.10">
    <property type="entry name" value="Cytochrome b5-like heme/steroid binding domain"/>
    <property type="match status" value="1"/>
</dbReference>
<dbReference type="Gene3D" id="3.40.50.80">
    <property type="entry name" value="Nucleotide-binding domain of ferredoxin-NADP reductase (FNR) module"/>
    <property type="match status" value="1"/>
</dbReference>
<dbReference type="Gene3D" id="3.90.420.10">
    <property type="entry name" value="Oxidoreductase, molybdopterin-binding domain"/>
    <property type="match status" value="1"/>
</dbReference>
<dbReference type="Gene3D" id="2.40.30.10">
    <property type="entry name" value="Translation factors"/>
    <property type="match status" value="1"/>
</dbReference>
<dbReference type="InterPro" id="IPR008333">
    <property type="entry name" value="Cbr1-like_FAD-bd_dom"/>
</dbReference>
<dbReference type="InterPro" id="IPR001199">
    <property type="entry name" value="Cyt_B5-like_heme/steroid-bd"/>
</dbReference>
<dbReference type="InterPro" id="IPR036400">
    <property type="entry name" value="Cyt_B5-like_heme/steroid_sf"/>
</dbReference>
<dbReference type="InterPro" id="IPR018506">
    <property type="entry name" value="Cyt_B5_heme-BS"/>
</dbReference>
<dbReference type="InterPro" id="IPR017927">
    <property type="entry name" value="FAD-bd_FR_type"/>
</dbReference>
<dbReference type="InterPro" id="IPR001709">
    <property type="entry name" value="Flavoprot_Pyr_Nucl_cyt_Rdtase"/>
</dbReference>
<dbReference type="InterPro" id="IPR039261">
    <property type="entry name" value="FNR_nucleotide-bd"/>
</dbReference>
<dbReference type="InterPro" id="IPR014756">
    <property type="entry name" value="Ig_E-set"/>
</dbReference>
<dbReference type="InterPro" id="IPR005066">
    <property type="entry name" value="MoCF_OxRdtse_dimer"/>
</dbReference>
<dbReference type="InterPro" id="IPR008335">
    <property type="entry name" value="Mopterin_OxRdtase_euk"/>
</dbReference>
<dbReference type="InterPro" id="IPR012137">
    <property type="entry name" value="Nitr_rd_NADH"/>
</dbReference>
<dbReference type="InterPro" id="IPR001433">
    <property type="entry name" value="OxRdtase_FAD/NAD-bd"/>
</dbReference>
<dbReference type="InterPro" id="IPR000572">
    <property type="entry name" value="OxRdtase_Mopterin-bd_dom"/>
</dbReference>
<dbReference type="InterPro" id="IPR036374">
    <property type="entry name" value="OxRdtase_Mopterin-bd_sf"/>
</dbReference>
<dbReference type="InterPro" id="IPR022407">
    <property type="entry name" value="OxRdtase_Mopterin_BS"/>
</dbReference>
<dbReference type="InterPro" id="IPR017938">
    <property type="entry name" value="Riboflavin_synthase-like_b-brl"/>
</dbReference>
<dbReference type="PANTHER" id="PTHR19372:SF7">
    <property type="entry name" value="SULFITE OXIDASE, MITOCHONDRIAL"/>
    <property type="match status" value="1"/>
</dbReference>
<dbReference type="PANTHER" id="PTHR19372">
    <property type="entry name" value="SULFITE REDUCTASE"/>
    <property type="match status" value="1"/>
</dbReference>
<dbReference type="Pfam" id="PF00173">
    <property type="entry name" value="Cyt-b5"/>
    <property type="match status" value="1"/>
</dbReference>
<dbReference type="Pfam" id="PF00970">
    <property type="entry name" value="FAD_binding_6"/>
    <property type="match status" value="1"/>
</dbReference>
<dbReference type="Pfam" id="PF03404">
    <property type="entry name" value="Mo-co_dimer"/>
    <property type="match status" value="1"/>
</dbReference>
<dbReference type="Pfam" id="PF00175">
    <property type="entry name" value="NAD_binding_1"/>
    <property type="match status" value="1"/>
</dbReference>
<dbReference type="Pfam" id="PF00174">
    <property type="entry name" value="Oxidored_molyb"/>
    <property type="match status" value="1"/>
</dbReference>
<dbReference type="PIRSF" id="PIRSF000233">
    <property type="entry name" value="Nitr_rd_NADH"/>
    <property type="match status" value="1"/>
</dbReference>
<dbReference type="PRINTS" id="PR00406">
    <property type="entry name" value="CYTB5RDTASE"/>
</dbReference>
<dbReference type="PRINTS" id="PR00363">
    <property type="entry name" value="CYTOCHROMEB5"/>
</dbReference>
<dbReference type="PRINTS" id="PR00407">
    <property type="entry name" value="EUMOPTERIN"/>
</dbReference>
<dbReference type="PRINTS" id="PR00371">
    <property type="entry name" value="FPNCR"/>
</dbReference>
<dbReference type="SMART" id="SM01117">
    <property type="entry name" value="Cyt-b5"/>
    <property type="match status" value="1"/>
</dbReference>
<dbReference type="SUPFAM" id="SSF55856">
    <property type="entry name" value="Cytochrome b5-like heme/steroid binding domain"/>
    <property type="match status" value="1"/>
</dbReference>
<dbReference type="SUPFAM" id="SSF81296">
    <property type="entry name" value="E set domains"/>
    <property type="match status" value="1"/>
</dbReference>
<dbReference type="SUPFAM" id="SSF52343">
    <property type="entry name" value="Ferredoxin reductase-like, C-terminal NADP-linked domain"/>
    <property type="match status" value="1"/>
</dbReference>
<dbReference type="SUPFAM" id="SSF56524">
    <property type="entry name" value="Oxidoreductase molybdopterin-binding domain"/>
    <property type="match status" value="1"/>
</dbReference>
<dbReference type="SUPFAM" id="SSF63380">
    <property type="entry name" value="Riboflavin synthase domain-like"/>
    <property type="match status" value="1"/>
</dbReference>
<dbReference type="PROSITE" id="PS00191">
    <property type="entry name" value="CYTOCHROME_B5_1"/>
    <property type="match status" value="1"/>
</dbReference>
<dbReference type="PROSITE" id="PS50255">
    <property type="entry name" value="CYTOCHROME_B5_2"/>
    <property type="match status" value="1"/>
</dbReference>
<dbReference type="PROSITE" id="PS51384">
    <property type="entry name" value="FAD_FR"/>
    <property type="match status" value="1"/>
</dbReference>
<dbReference type="PROSITE" id="PS00559">
    <property type="entry name" value="MOLYBDOPTERIN_EUK"/>
    <property type="match status" value="1"/>
</dbReference>
<accession>P39865</accession>
<proteinExistence type="inferred from homology"/>
<feature type="chain" id="PRO_0000166067" description="Nitrate reductase [NADH] 1">
    <location>
        <begin position="1"/>
        <end position="881"/>
    </location>
</feature>
<feature type="domain" description="Cytochrome b5 heme-binding" evidence="6">
    <location>
        <begin position="515"/>
        <end position="590"/>
    </location>
</feature>
<feature type="domain" description="FAD-binding FR-type" evidence="7">
    <location>
        <begin position="625"/>
        <end position="737"/>
    </location>
</feature>
<feature type="region of interest" description="Disordered" evidence="8">
    <location>
        <begin position="1"/>
        <end position="46"/>
    </location>
</feature>
<feature type="binding site" evidence="4">
    <location>
        <position position="167"/>
    </location>
    <ligand>
        <name>Mo-molybdopterin</name>
        <dbReference type="ChEBI" id="CHEBI:71302"/>
    </ligand>
    <ligandPart>
        <name>Mo</name>
        <dbReference type="ChEBI" id="CHEBI:28685"/>
    </ligandPart>
</feature>
<feature type="binding site" description="axial binding residue" evidence="6">
    <location>
        <position position="550"/>
    </location>
    <ligand>
        <name>heme</name>
        <dbReference type="ChEBI" id="CHEBI:30413"/>
    </ligand>
    <ligandPart>
        <name>Fe</name>
        <dbReference type="ChEBI" id="CHEBI:18248"/>
    </ligandPart>
</feature>
<feature type="binding site" description="axial binding residue" evidence="6">
    <location>
        <position position="573"/>
    </location>
    <ligand>
        <name>heme</name>
        <dbReference type="ChEBI" id="CHEBI:30413"/>
    </ligand>
    <ligandPart>
        <name>Fe</name>
        <dbReference type="ChEBI" id="CHEBI:18248"/>
    </ligandPart>
</feature>
<feature type="binding site" evidence="2">
    <location>
        <begin position="677"/>
        <end position="680"/>
    </location>
    <ligand>
        <name>FAD</name>
        <dbReference type="ChEBI" id="CHEBI:57692"/>
    </ligand>
</feature>
<feature type="binding site" evidence="2">
    <location>
        <begin position="694"/>
        <end position="698"/>
    </location>
    <ligand>
        <name>FAD</name>
        <dbReference type="ChEBI" id="CHEBI:57692"/>
    </ligand>
</feature>
<feature type="binding site" evidence="3">
    <location>
        <position position="699"/>
    </location>
    <ligand>
        <name>FAD</name>
        <dbReference type="ChEBI" id="CHEBI:57692"/>
    </ligand>
</feature>
<feature type="binding site" evidence="2">
    <location>
        <position position="706"/>
    </location>
    <ligand>
        <name>FAD</name>
        <dbReference type="ChEBI" id="CHEBI:57692"/>
    </ligand>
</feature>
<feature type="binding site" evidence="2">
    <location>
        <begin position="711"/>
        <end position="713"/>
    </location>
    <ligand>
        <name>FAD</name>
        <dbReference type="ChEBI" id="CHEBI:57692"/>
    </ligand>
</feature>
<feature type="binding site" evidence="2">
    <location>
        <position position="764"/>
    </location>
    <ligand>
        <name>FAD</name>
        <dbReference type="ChEBI" id="CHEBI:57692"/>
    </ligand>
</feature>
<feature type="disulfide bond" description="Interchain" evidence="5">
    <location>
        <position position="406"/>
    </location>
</feature>